<gene>
    <name evidence="1" type="primary">fhs</name>
    <name type="ordered locus">mlr2763</name>
</gene>
<keyword id="KW-0067">ATP-binding</keyword>
<keyword id="KW-0436">Ligase</keyword>
<keyword id="KW-0547">Nucleotide-binding</keyword>
<keyword id="KW-0554">One-carbon metabolism</keyword>
<protein>
    <recommendedName>
        <fullName evidence="1">Formate--tetrahydrofolate ligase</fullName>
        <ecNumber evidence="1">6.3.4.3</ecNumber>
    </recommendedName>
    <alternativeName>
        <fullName evidence="1">Formyltetrahydrofolate synthetase</fullName>
        <shortName evidence="1">FHS</shortName>
        <shortName evidence="1">FTHFS</shortName>
    </alternativeName>
</protein>
<name>FTHS_RHILO</name>
<dbReference type="EC" id="6.3.4.3" evidence="1"/>
<dbReference type="EMBL" id="BA000012">
    <property type="protein sequence ID" value="BAB49812.1"/>
    <property type="molecule type" value="Genomic_DNA"/>
</dbReference>
<dbReference type="RefSeq" id="WP_010911161.1">
    <property type="nucleotide sequence ID" value="NC_002678.2"/>
</dbReference>
<dbReference type="SMR" id="Q98HQ4"/>
<dbReference type="KEGG" id="mlo:mlr2763"/>
<dbReference type="eggNOG" id="COG2759">
    <property type="taxonomic scope" value="Bacteria"/>
</dbReference>
<dbReference type="HOGENOM" id="CLU_003601_3_3_5"/>
<dbReference type="UniPathway" id="UPA00193"/>
<dbReference type="Proteomes" id="UP000000552">
    <property type="component" value="Chromosome"/>
</dbReference>
<dbReference type="GO" id="GO:0005524">
    <property type="term" value="F:ATP binding"/>
    <property type="evidence" value="ECO:0007669"/>
    <property type="project" value="UniProtKB-UniRule"/>
</dbReference>
<dbReference type="GO" id="GO:0004329">
    <property type="term" value="F:formate-tetrahydrofolate ligase activity"/>
    <property type="evidence" value="ECO:0007669"/>
    <property type="project" value="UniProtKB-UniRule"/>
</dbReference>
<dbReference type="GO" id="GO:0035999">
    <property type="term" value="P:tetrahydrofolate interconversion"/>
    <property type="evidence" value="ECO:0007669"/>
    <property type="project" value="UniProtKB-UniRule"/>
</dbReference>
<dbReference type="CDD" id="cd00477">
    <property type="entry name" value="FTHFS"/>
    <property type="match status" value="1"/>
</dbReference>
<dbReference type="FunFam" id="3.30.1510.10:FF:000001">
    <property type="entry name" value="Formate--tetrahydrofolate ligase"/>
    <property type="match status" value="1"/>
</dbReference>
<dbReference type="Gene3D" id="3.30.1510.10">
    <property type="entry name" value="Domain 2, N(10)-formyltetrahydrofolate synthetase"/>
    <property type="match status" value="1"/>
</dbReference>
<dbReference type="Gene3D" id="3.10.410.10">
    <property type="entry name" value="Formyltetrahydrofolate synthetase, domain 3"/>
    <property type="match status" value="1"/>
</dbReference>
<dbReference type="Gene3D" id="3.40.50.300">
    <property type="entry name" value="P-loop containing nucleotide triphosphate hydrolases"/>
    <property type="match status" value="1"/>
</dbReference>
<dbReference type="HAMAP" id="MF_01543">
    <property type="entry name" value="FTHFS"/>
    <property type="match status" value="1"/>
</dbReference>
<dbReference type="InterPro" id="IPR000559">
    <property type="entry name" value="Formate_THF_ligase"/>
</dbReference>
<dbReference type="InterPro" id="IPR020628">
    <property type="entry name" value="Formate_THF_ligase_CS"/>
</dbReference>
<dbReference type="InterPro" id="IPR027417">
    <property type="entry name" value="P-loop_NTPase"/>
</dbReference>
<dbReference type="NCBIfam" id="NF010030">
    <property type="entry name" value="PRK13505.1"/>
    <property type="match status" value="1"/>
</dbReference>
<dbReference type="Pfam" id="PF01268">
    <property type="entry name" value="FTHFS"/>
    <property type="match status" value="1"/>
</dbReference>
<dbReference type="SUPFAM" id="SSF52540">
    <property type="entry name" value="P-loop containing nucleoside triphosphate hydrolases"/>
    <property type="match status" value="1"/>
</dbReference>
<dbReference type="PROSITE" id="PS00721">
    <property type="entry name" value="FTHFS_1"/>
    <property type="match status" value="1"/>
</dbReference>
<dbReference type="PROSITE" id="PS00722">
    <property type="entry name" value="FTHFS_2"/>
    <property type="match status" value="1"/>
</dbReference>
<sequence>MAEVKSDIEIARAAKKKQIQEIGQKIGIPTEHLLPYGHDKAKISAEFIKSVKGNKDGKLILVTAINPTPAGEGKTTTTVGLGDGLNRIGKKAIVCIREASLGPNFGVKGGAAGGGYAQVVPMEDMNLHFTGDFHAITTAHNLLSALIDNHIYWGNELGIDTRRVVWRRVMDMNDRALREMICSLGGVANGFPREGGFDITVASEVMAILCLSTDLKDLEKRLGDIIVAYRRDKSPVYARDLKADGAMAVLLKDAMQPNLVQTLENNPAFVHGGPFANIAHGCNSVVATTTALKLADYVVTEAGFGADLGAEKFFDIKCRKAGLKPAAAVIVATVRAMKMNGGVKKEDLGKENIEAVKKGCANLGRHIENIRQFGVPAVVAINHFYSDTDAEIQAMKDYVASMGEEAVLCKHWAKGSAGIEELANKVVALAESGASQFAPLYPDAMPLFEKINTIVQRIYRGSEAIADKSVRDQLHAWEQAGYGNLPVCMAKTQYSFSTDPNLRGAPTGHTVPVREVRLSAGAGFVVIICGEVMTMPGLPKAPSSEKIFLNEAGQIEGLF</sequence>
<organism>
    <name type="scientific">Mesorhizobium japonicum (strain LMG 29417 / CECT 9101 / MAFF 303099)</name>
    <name type="common">Mesorhizobium loti (strain MAFF 303099)</name>
    <dbReference type="NCBI Taxonomy" id="266835"/>
    <lineage>
        <taxon>Bacteria</taxon>
        <taxon>Pseudomonadati</taxon>
        <taxon>Pseudomonadota</taxon>
        <taxon>Alphaproteobacteria</taxon>
        <taxon>Hyphomicrobiales</taxon>
        <taxon>Phyllobacteriaceae</taxon>
        <taxon>Mesorhizobium</taxon>
    </lineage>
</organism>
<proteinExistence type="inferred from homology"/>
<reference key="1">
    <citation type="journal article" date="2000" name="DNA Res.">
        <title>Complete genome structure of the nitrogen-fixing symbiotic bacterium Mesorhizobium loti.</title>
        <authorList>
            <person name="Kaneko T."/>
            <person name="Nakamura Y."/>
            <person name="Sato S."/>
            <person name="Asamizu E."/>
            <person name="Kato T."/>
            <person name="Sasamoto S."/>
            <person name="Watanabe A."/>
            <person name="Idesawa K."/>
            <person name="Ishikawa A."/>
            <person name="Kawashima K."/>
            <person name="Kimura T."/>
            <person name="Kishida Y."/>
            <person name="Kiyokawa C."/>
            <person name="Kohara M."/>
            <person name="Matsumoto M."/>
            <person name="Matsuno A."/>
            <person name="Mochizuki Y."/>
            <person name="Nakayama S."/>
            <person name="Nakazaki N."/>
            <person name="Shimpo S."/>
            <person name="Sugimoto M."/>
            <person name="Takeuchi C."/>
            <person name="Yamada M."/>
            <person name="Tabata S."/>
        </authorList>
    </citation>
    <scope>NUCLEOTIDE SEQUENCE [LARGE SCALE GENOMIC DNA]</scope>
    <source>
        <strain>LMG 29417 / CECT 9101 / MAFF 303099</strain>
    </source>
</reference>
<evidence type="ECO:0000255" key="1">
    <source>
        <dbReference type="HAMAP-Rule" id="MF_01543"/>
    </source>
</evidence>
<accession>Q98HQ4</accession>
<comment type="catalytic activity">
    <reaction evidence="1">
        <text>(6S)-5,6,7,8-tetrahydrofolate + formate + ATP = (6R)-10-formyltetrahydrofolate + ADP + phosphate</text>
        <dbReference type="Rhea" id="RHEA:20221"/>
        <dbReference type="ChEBI" id="CHEBI:15740"/>
        <dbReference type="ChEBI" id="CHEBI:30616"/>
        <dbReference type="ChEBI" id="CHEBI:43474"/>
        <dbReference type="ChEBI" id="CHEBI:57453"/>
        <dbReference type="ChEBI" id="CHEBI:195366"/>
        <dbReference type="ChEBI" id="CHEBI:456216"/>
        <dbReference type="EC" id="6.3.4.3"/>
    </reaction>
</comment>
<comment type="pathway">
    <text evidence="1">One-carbon metabolism; tetrahydrofolate interconversion.</text>
</comment>
<comment type="similarity">
    <text evidence="1">Belongs to the formate--tetrahydrofolate ligase family.</text>
</comment>
<feature type="chain" id="PRO_0000199371" description="Formate--tetrahydrofolate ligase">
    <location>
        <begin position="1"/>
        <end position="559"/>
    </location>
</feature>
<feature type="binding site" evidence="1">
    <location>
        <begin position="68"/>
        <end position="75"/>
    </location>
    <ligand>
        <name>ATP</name>
        <dbReference type="ChEBI" id="CHEBI:30616"/>
    </ligand>
</feature>